<evidence type="ECO:0000255" key="1">
    <source>
        <dbReference type="HAMAP-Rule" id="MF_02123"/>
    </source>
</evidence>
<proteinExistence type="inferred from homology"/>
<organism>
    <name type="scientific">Mycolicibacterium gilvum (strain PYR-GCK)</name>
    <name type="common">Mycobacterium gilvum (strain PYR-GCK)</name>
    <dbReference type="NCBI Taxonomy" id="350054"/>
    <lineage>
        <taxon>Bacteria</taxon>
        <taxon>Bacillati</taxon>
        <taxon>Actinomycetota</taxon>
        <taxon>Actinomycetes</taxon>
        <taxon>Mycobacteriales</taxon>
        <taxon>Mycobacteriaceae</taxon>
        <taxon>Mycolicibacterium</taxon>
    </lineage>
</organism>
<gene>
    <name evidence="1" type="primary">fgd</name>
    <name type="ordered locus">Mflv_0211</name>
</gene>
<comment type="function">
    <text evidence="1">Catalyzes the coenzyme F420-dependent oxidation of glucose 6-phosphate (G6P) to 6-phosphogluconolactone. Appears to have a role in resistance to oxidative stress, via its consumption of G6P that serves as a source of reducing power to combat oxidative stress in mycobacteria.</text>
</comment>
<comment type="catalytic activity">
    <reaction evidence="1">
        <text>oxidized coenzyme F420-(gamma-L-Glu)(n) + D-glucose 6-phosphate + H(+) = 6-phospho-D-glucono-1,5-lactone + reduced coenzyme F420-(gamma-L-Glu)(n)</text>
        <dbReference type="Rhea" id="RHEA:27294"/>
        <dbReference type="Rhea" id="RHEA-COMP:12939"/>
        <dbReference type="Rhea" id="RHEA-COMP:14378"/>
        <dbReference type="ChEBI" id="CHEBI:15378"/>
        <dbReference type="ChEBI" id="CHEBI:57955"/>
        <dbReference type="ChEBI" id="CHEBI:61548"/>
        <dbReference type="ChEBI" id="CHEBI:133980"/>
        <dbReference type="ChEBI" id="CHEBI:139511"/>
        <dbReference type="EC" id="1.1.98.2"/>
    </reaction>
</comment>
<comment type="subunit">
    <text evidence="1">Homodimer.</text>
</comment>
<comment type="similarity">
    <text evidence="1">Belongs to the F420-dependent glucose-6-phosphate dehydrogenase family.</text>
</comment>
<dbReference type="EC" id="1.1.98.2" evidence="1"/>
<dbReference type="EMBL" id="CP000656">
    <property type="protein sequence ID" value="ABP42706.1"/>
    <property type="molecule type" value="Genomic_DNA"/>
</dbReference>
<dbReference type="SMR" id="A4T163"/>
<dbReference type="STRING" id="350054.Mflv_0211"/>
<dbReference type="KEGG" id="mgi:Mflv_0211"/>
<dbReference type="eggNOG" id="COG2141">
    <property type="taxonomic scope" value="Bacteria"/>
</dbReference>
<dbReference type="HOGENOM" id="CLU_027853_4_0_11"/>
<dbReference type="OrthoDB" id="180193at2"/>
<dbReference type="GO" id="GO:0070967">
    <property type="term" value="F:coenzyme F420 binding"/>
    <property type="evidence" value="ECO:0007669"/>
    <property type="project" value="UniProtKB-UniRule"/>
</dbReference>
<dbReference type="GO" id="GO:0052749">
    <property type="term" value="F:glucose-6-phosphate dehydrogenase (coenzyme F420) activity"/>
    <property type="evidence" value="ECO:0007669"/>
    <property type="project" value="UniProtKB-EC"/>
</dbReference>
<dbReference type="GO" id="GO:0016705">
    <property type="term" value="F:oxidoreductase activity, acting on paired donors, with incorporation or reduction of molecular oxygen"/>
    <property type="evidence" value="ECO:0007669"/>
    <property type="project" value="InterPro"/>
</dbReference>
<dbReference type="GO" id="GO:0005975">
    <property type="term" value="P:carbohydrate metabolic process"/>
    <property type="evidence" value="ECO:0007669"/>
    <property type="project" value="UniProtKB-UniRule"/>
</dbReference>
<dbReference type="CDD" id="cd01097">
    <property type="entry name" value="Tetrahydromethanopterin_reductase"/>
    <property type="match status" value="1"/>
</dbReference>
<dbReference type="FunFam" id="3.20.20.30:FF:000004">
    <property type="entry name" value="F420-dependent glucose-6-phosphate dehydrogenase"/>
    <property type="match status" value="1"/>
</dbReference>
<dbReference type="Gene3D" id="3.20.20.30">
    <property type="entry name" value="Luciferase-like domain"/>
    <property type="match status" value="1"/>
</dbReference>
<dbReference type="HAMAP" id="MF_02123">
    <property type="entry name" value="F420_G6P_DH"/>
    <property type="match status" value="1"/>
</dbReference>
<dbReference type="InterPro" id="IPR019944">
    <property type="entry name" value="F420-dep_G6P_DH"/>
</dbReference>
<dbReference type="InterPro" id="IPR050564">
    <property type="entry name" value="F420-G6PD/mer"/>
</dbReference>
<dbReference type="InterPro" id="IPR019945">
    <property type="entry name" value="F420_G6P_DH-rel"/>
</dbReference>
<dbReference type="InterPro" id="IPR011251">
    <property type="entry name" value="Luciferase-like_dom"/>
</dbReference>
<dbReference type="InterPro" id="IPR036661">
    <property type="entry name" value="Luciferase-like_sf"/>
</dbReference>
<dbReference type="NCBIfam" id="TIGR03554">
    <property type="entry name" value="F420_G6P_DH"/>
    <property type="match status" value="1"/>
</dbReference>
<dbReference type="NCBIfam" id="TIGR03557">
    <property type="entry name" value="F420_G6P_family"/>
    <property type="match status" value="1"/>
</dbReference>
<dbReference type="PANTHER" id="PTHR43244">
    <property type="match status" value="1"/>
</dbReference>
<dbReference type="PANTHER" id="PTHR43244:SF1">
    <property type="entry name" value="5,10-METHYLENETETRAHYDROMETHANOPTERIN REDUCTASE"/>
    <property type="match status" value="1"/>
</dbReference>
<dbReference type="Pfam" id="PF00296">
    <property type="entry name" value="Bac_luciferase"/>
    <property type="match status" value="1"/>
</dbReference>
<dbReference type="SUPFAM" id="SSF51679">
    <property type="entry name" value="Bacterial luciferase-like"/>
    <property type="match status" value="1"/>
</dbReference>
<feature type="chain" id="PRO_0000413594" description="F420-dependent glucose-6-phosphate dehydrogenase">
    <location>
        <begin position="1"/>
        <end position="336"/>
    </location>
</feature>
<feature type="active site" description="Proton donor" evidence="1">
    <location>
        <position position="40"/>
    </location>
</feature>
<feature type="active site" description="Proton acceptor" evidence="1">
    <location>
        <position position="109"/>
    </location>
</feature>
<feature type="binding site" evidence="1">
    <location>
        <position position="39"/>
    </location>
    <ligand>
        <name>coenzyme F420-(gamma-Glu)n</name>
        <dbReference type="ChEBI" id="CHEBI:133980"/>
    </ligand>
</feature>
<feature type="binding site" evidence="1">
    <location>
        <position position="76"/>
    </location>
    <ligand>
        <name>coenzyme F420-(gamma-Glu)n</name>
        <dbReference type="ChEBI" id="CHEBI:133980"/>
    </ligand>
</feature>
<feature type="binding site" evidence="1">
    <location>
        <begin position="107"/>
        <end position="108"/>
    </location>
    <ligand>
        <name>coenzyme F420-(gamma-Glu)n</name>
        <dbReference type="ChEBI" id="CHEBI:133980"/>
    </ligand>
</feature>
<feature type="binding site" evidence="1">
    <location>
        <position position="112"/>
    </location>
    <ligand>
        <name>coenzyme F420-(gamma-Glu)n</name>
        <dbReference type="ChEBI" id="CHEBI:133980"/>
    </ligand>
</feature>
<feature type="binding site" evidence="1">
    <location>
        <begin position="177"/>
        <end position="178"/>
    </location>
    <ligand>
        <name>coenzyme F420-(gamma-Glu)n</name>
        <dbReference type="ChEBI" id="CHEBI:133980"/>
    </ligand>
</feature>
<feature type="binding site" evidence="1">
    <location>
        <begin position="180"/>
        <end position="181"/>
    </location>
    <ligand>
        <name>coenzyme F420-(gamma-Glu)n</name>
        <dbReference type="ChEBI" id="CHEBI:133980"/>
    </ligand>
</feature>
<feature type="binding site" evidence="1">
    <location>
        <position position="195"/>
    </location>
    <ligand>
        <name>substrate</name>
    </ligand>
</feature>
<feature type="binding site" evidence="1">
    <location>
        <position position="198"/>
    </location>
    <ligand>
        <name>substrate</name>
    </ligand>
</feature>
<feature type="binding site" evidence="1">
    <location>
        <position position="259"/>
    </location>
    <ligand>
        <name>substrate</name>
    </ligand>
</feature>
<feature type="binding site" evidence="1">
    <location>
        <position position="283"/>
    </location>
    <ligand>
        <name>substrate</name>
    </ligand>
</feature>
<sequence>MAELKLGYKASAEQFAPRELVELAVAAEEHGMDSATVSDHFQPWRHEGGHAPFSLAWMTAVGERTTRLQLGTSVLTPTFRYNPAVIAQAFATMGCLYPDRIFLGVGTGEALNEIATGYEGEWPEFKERYARLRESVRLMRELWLGDRVDFEGEYYKTKGASIYDVPEGGIPIYIAAGGPQVAKYAGRAGDGFICTSGKGEELYKEKLIPAMREGAEAAGKNPDDVDRMIEIKISYDTDPELALENTRFWAPLSLTAEQKHSIDDPMEMEKAADELPIEQVAKRWIVASDPDEAVAKVADYVDYGLNHLVFHAPGHDQRRFLELFQRDLEPRLRKLG</sequence>
<accession>A4T163</accession>
<protein>
    <recommendedName>
        <fullName evidence="1">F420-dependent glucose-6-phosphate dehydrogenase</fullName>
        <shortName evidence="1">FGD</shortName>
        <shortName evidence="1">G6PD</shortName>
        <ecNumber evidence="1">1.1.98.2</ecNumber>
    </recommendedName>
</protein>
<keyword id="KW-0119">Carbohydrate metabolism</keyword>
<keyword id="KW-0560">Oxidoreductase</keyword>
<reference key="1">
    <citation type="submission" date="2007-04" db="EMBL/GenBank/DDBJ databases">
        <title>Complete sequence of chromosome of Mycobacterium gilvum PYR-GCK.</title>
        <authorList>
            <consortium name="US DOE Joint Genome Institute"/>
            <person name="Copeland A."/>
            <person name="Lucas S."/>
            <person name="Lapidus A."/>
            <person name="Barry K."/>
            <person name="Detter J.C."/>
            <person name="Glavina del Rio T."/>
            <person name="Hammon N."/>
            <person name="Israni S."/>
            <person name="Dalin E."/>
            <person name="Tice H."/>
            <person name="Pitluck S."/>
            <person name="Chain P."/>
            <person name="Malfatti S."/>
            <person name="Shin M."/>
            <person name="Vergez L."/>
            <person name="Schmutz J."/>
            <person name="Larimer F."/>
            <person name="Land M."/>
            <person name="Hauser L."/>
            <person name="Kyrpides N."/>
            <person name="Mikhailova N."/>
            <person name="Miller C."/>
            <person name="Richardson P."/>
        </authorList>
    </citation>
    <scope>NUCLEOTIDE SEQUENCE [LARGE SCALE GENOMIC DNA]</scope>
    <source>
        <strain>PYR-GCK</strain>
    </source>
</reference>
<name>FGD_MYCGI</name>